<organism>
    <name type="scientific">Ovis aries</name>
    <name type="common">Sheep</name>
    <dbReference type="NCBI Taxonomy" id="9940"/>
    <lineage>
        <taxon>Eukaryota</taxon>
        <taxon>Metazoa</taxon>
        <taxon>Chordata</taxon>
        <taxon>Craniata</taxon>
        <taxon>Vertebrata</taxon>
        <taxon>Euteleostomi</taxon>
        <taxon>Mammalia</taxon>
        <taxon>Eutheria</taxon>
        <taxon>Laurasiatheria</taxon>
        <taxon>Artiodactyla</taxon>
        <taxon>Ruminantia</taxon>
        <taxon>Pecora</taxon>
        <taxon>Bovidae</taxon>
        <taxon>Caprinae</taxon>
        <taxon>Ovis</taxon>
    </lineage>
</organism>
<feature type="peptide" id="PRO_0000044668" description="Calcitonin gene-related peptide 1">
    <location>
        <begin position="1"/>
        <end position="37"/>
    </location>
</feature>
<feature type="modified residue" description="Phenylalanine amide" evidence="2">
    <location>
        <position position="37"/>
    </location>
</feature>
<feature type="disulfide bond" evidence="1">
    <location>
        <begin position="2"/>
        <end position="7"/>
    </location>
</feature>
<accession>P30881</accession>
<reference key="1">
    <citation type="journal article" date="1992" name="Biochem. Biophys. Res. Commun.">
        <title>Identification of calcitonin gene related peptide in ovine hypothalamic extract.</title>
        <authorList>
            <person name="Miyata A."/>
            <person name="Jiang L."/>
            <person name="Minamino N."/>
            <person name="Arimura A."/>
        </authorList>
    </citation>
    <scope>PROTEIN SEQUENCE</scope>
    <scope>AMIDATION AT PHE-37</scope>
    <source>
        <tissue>Hypothalamus</tissue>
    </source>
</reference>
<proteinExistence type="evidence at protein level"/>
<evidence type="ECO:0000250" key="1">
    <source>
        <dbReference type="UniProtKB" id="P06881"/>
    </source>
</evidence>
<evidence type="ECO:0000269" key="2">
    <source>
    </source>
</evidence>
<evidence type="ECO:0000305" key="3"/>
<name>CALCA_SHEEP</name>
<gene>
    <name type="primary">CALCA</name>
    <name type="synonym">CALC</name>
</gene>
<comment type="function">
    <text evidence="1">CGRP1/CALCA is a peptide hormone that induces vasodilation mediated by the CALCRL-RAMP1 receptor complex. Dilates a variety of vessels including the coronary, cerebral and systemic vasculature. Its abundance in the CNS also points toward a neurotransmitter or neuromodulator role. It also elevates platelet cAMP. CGRP1 can also bind and activate CALCR-RAMP1 (AMYR1) receptor complex.</text>
</comment>
<comment type="subcellular location">
    <subcellularLocation>
        <location evidence="1">Secreted</location>
    </subcellularLocation>
</comment>
<comment type="similarity">
    <text evidence="3">Belongs to the calcitonin family.</text>
</comment>
<sequence length="37" mass="3780">SCNTATCVTHRLAGLLSRSGGVVKSNFVPTNVGSQAF</sequence>
<dbReference type="PIR" id="JH0709">
    <property type="entry name" value="JH0709"/>
</dbReference>
<dbReference type="SMR" id="P30881"/>
<dbReference type="STRING" id="9940.ENSOARP00000022799"/>
<dbReference type="PaxDb" id="9940-ENSOARP00000022799"/>
<dbReference type="Proteomes" id="UP000002356">
    <property type="component" value="Unplaced"/>
</dbReference>
<dbReference type="GO" id="GO:0005615">
    <property type="term" value="C:extracellular space"/>
    <property type="evidence" value="ECO:0007669"/>
    <property type="project" value="TreeGrafter"/>
</dbReference>
<dbReference type="GO" id="GO:0031716">
    <property type="term" value="F:calcitonin receptor binding"/>
    <property type="evidence" value="ECO:0007669"/>
    <property type="project" value="TreeGrafter"/>
</dbReference>
<dbReference type="GO" id="GO:0005179">
    <property type="term" value="F:hormone activity"/>
    <property type="evidence" value="ECO:0007669"/>
    <property type="project" value="UniProtKB-KW"/>
</dbReference>
<dbReference type="GO" id="GO:0007189">
    <property type="term" value="P:adenylate cyclase-activating G protein-coupled receptor signaling pathway"/>
    <property type="evidence" value="ECO:0007669"/>
    <property type="project" value="TreeGrafter"/>
</dbReference>
<dbReference type="GO" id="GO:0051480">
    <property type="term" value="P:regulation of cytosolic calcium ion concentration"/>
    <property type="evidence" value="ECO:0007669"/>
    <property type="project" value="TreeGrafter"/>
</dbReference>
<dbReference type="Gene3D" id="6.10.250.2190">
    <property type="match status" value="1"/>
</dbReference>
<dbReference type="InterPro" id="IPR021117">
    <property type="entry name" value="Calcitonin-like"/>
</dbReference>
<dbReference type="InterPro" id="IPR021116">
    <property type="entry name" value="Calcitonin/adrenomedullin"/>
</dbReference>
<dbReference type="InterPro" id="IPR018360">
    <property type="entry name" value="Calcitonin_CS"/>
</dbReference>
<dbReference type="InterPro" id="IPR015476">
    <property type="entry name" value="Calcitonin_gene-rel_peptide"/>
</dbReference>
<dbReference type="InterPro" id="IPR001693">
    <property type="entry name" value="Calcitonin_peptide-like"/>
</dbReference>
<dbReference type="PANTHER" id="PTHR10505:SF3">
    <property type="entry name" value="CALCITONIN GENE-RELATED PEPTIDE 2"/>
    <property type="match status" value="1"/>
</dbReference>
<dbReference type="PANTHER" id="PTHR10505">
    <property type="entry name" value="CALCITONIN-RELATED"/>
    <property type="match status" value="1"/>
</dbReference>
<dbReference type="Pfam" id="PF00214">
    <property type="entry name" value="Calc_CGRP_IAPP"/>
    <property type="match status" value="1"/>
</dbReference>
<dbReference type="PRINTS" id="PR00817">
    <property type="entry name" value="CALCITONINB"/>
</dbReference>
<dbReference type="SMART" id="SM00113">
    <property type="entry name" value="CALCITONIN"/>
    <property type="match status" value="1"/>
</dbReference>
<dbReference type="PROSITE" id="PS00258">
    <property type="entry name" value="CALCITONIN"/>
    <property type="match status" value="1"/>
</dbReference>
<protein>
    <recommendedName>
        <fullName>Calcitonin gene-related peptide 1</fullName>
        <shortName evidence="1">CGRP1</shortName>
    </recommendedName>
    <alternativeName>
        <fullName>Calcitonin gene-related peptide</fullName>
        <shortName>CGRP</shortName>
    </alternativeName>
</protein>
<keyword id="KW-0027">Amidation</keyword>
<keyword id="KW-0903">Direct protein sequencing</keyword>
<keyword id="KW-1015">Disulfide bond</keyword>
<keyword id="KW-0372">Hormone</keyword>
<keyword id="KW-1185">Reference proteome</keyword>
<keyword id="KW-0964">Secreted</keyword>